<accession>Q5R4S2</accession>
<evidence type="ECO:0000250" key="1">
    <source>
        <dbReference type="UniProtKB" id="O43505"/>
    </source>
</evidence>
<evidence type="ECO:0000250" key="2">
    <source>
        <dbReference type="UniProtKB" id="Q8BWP8"/>
    </source>
</evidence>
<evidence type="ECO:0000255" key="3"/>
<evidence type="ECO:0000305" key="4"/>
<feature type="chain" id="PRO_0000080557" description="Beta-1,4-glucuronyltransferase 1">
    <location>
        <begin position="1"/>
        <end position="415"/>
    </location>
</feature>
<feature type="topological domain" description="Cytoplasmic" evidence="3">
    <location>
        <begin position="1"/>
        <end position="8"/>
    </location>
</feature>
<feature type="transmembrane region" description="Helical; Signal-anchor for type II membrane protein" evidence="3">
    <location>
        <begin position="9"/>
        <end position="36"/>
    </location>
</feature>
<feature type="topological domain" description="Lumenal" evidence="3">
    <location>
        <begin position="37"/>
        <end position="415"/>
    </location>
</feature>
<feature type="binding site" evidence="1">
    <location>
        <position position="227"/>
    </location>
    <ligand>
        <name>Mn(2+)</name>
        <dbReference type="ChEBI" id="CHEBI:29035"/>
    </ligand>
</feature>
<feature type="binding site" evidence="1">
    <location>
        <position position="229"/>
    </location>
    <ligand>
        <name>Mn(2+)</name>
        <dbReference type="ChEBI" id="CHEBI:29035"/>
    </ligand>
</feature>
<feature type="glycosylation site" description="N-linked (GlcNAc...) asparagine" evidence="3">
    <location>
        <position position="204"/>
    </location>
</feature>
<feature type="glycosylation site" description="N-linked (GlcNAc...) asparagine" evidence="3">
    <location>
        <position position="300"/>
    </location>
</feature>
<dbReference type="EC" id="2.4.1.-" evidence="1"/>
<dbReference type="EMBL" id="CR861172">
    <property type="protein sequence ID" value="CAH93244.1"/>
    <property type="molecule type" value="mRNA"/>
</dbReference>
<dbReference type="RefSeq" id="NP_001126908.1">
    <property type="nucleotide sequence ID" value="NM_001133436.1"/>
</dbReference>
<dbReference type="SMR" id="Q5R4S2"/>
<dbReference type="FunCoup" id="Q5R4S2">
    <property type="interactions" value="333"/>
</dbReference>
<dbReference type="STRING" id="9601.ENSPPYP00000004686"/>
<dbReference type="CAZy" id="GT49">
    <property type="family name" value="Glycosyltransferase Family 49"/>
</dbReference>
<dbReference type="GlyCosmos" id="Q5R4S2">
    <property type="glycosylation" value="2 sites, No reported glycans"/>
</dbReference>
<dbReference type="Ensembl" id="ENSPPYT00000004871.2">
    <property type="protein sequence ID" value="ENSPPYP00000004686.2"/>
    <property type="gene ID" value="ENSPPYG00000004108.2"/>
</dbReference>
<dbReference type="GeneID" id="100173924"/>
<dbReference type="KEGG" id="pon:100173924"/>
<dbReference type="CTD" id="11041"/>
<dbReference type="eggNOG" id="KOG3765">
    <property type="taxonomic scope" value="Eukaryota"/>
</dbReference>
<dbReference type="GeneTree" id="ENSGT00940000157679"/>
<dbReference type="InParanoid" id="Q5R4S2"/>
<dbReference type="OMA" id="SGQYRIY"/>
<dbReference type="OrthoDB" id="9974378at2759"/>
<dbReference type="UniPathway" id="UPA00378"/>
<dbReference type="Proteomes" id="UP000001595">
    <property type="component" value="Chromosome 11"/>
</dbReference>
<dbReference type="GO" id="GO:0005794">
    <property type="term" value="C:Golgi apparatus"/>
    <property type="evidence" value="ECO:0000250"/>
    <property type="project" value="UniProtKB"/>
</dbReference>
<dbReference type="GO" id="GO:0000139">
    <property type="term" value="C:Golgi membrane"/>
    <property type="evidence" value="ECO:0007669"/>
    <property type="project" value="UniProtKB-SubCell"/>
</dbReference>
<dbReference type="GO" id="GO:0015020">
    <property type="term" value="F:glucuronosyltransferase activity"/>
    <property type="evidence" value="ECO:0000250"/>
    <property type="project" value="UniProtKB"/>
</dbReference>
<dbReference type="GO" id="GO:0046872">
    <property type="term" value="F:metal ion binding"/>
    <property type="evidence" value="ECO:0007669"/>
    <property type="project" value="UniProtKB-KW"/>
</dbReference>
<dbReference type="GO" id="GO:0007411">
    <property type="term" value="P:axon guidance"/>
    <property type="evidence" value="ECO:0007669"/>
    <property type="project" value="Ensembl"/>
</dbReference>
<dbReference type="GO" id="GO:0035269">
    <property type="term" value="P:protein O-linked mannosylation"/>
    <property type="evidence" value="ECO:0000250"/>
    <property type="project" value="UniProtKB"/>
</dbReference>
<dbReference type="InterPro" id="IPR043189">
    <property type="entry name" value="B4GAT1"/>
</dbReference>
<dbReference type="PANTHER" id="PTHR46420">
    <property type="entry name" value="BETA-1,4-GLUCURONYLTRANSFERASE 1"/>
    <property type="match status" value="1"/>
</dbReference>
<dbReference type="PANTHER" id="PTHR46420:SF1">
    <property type="entry name" value="BETA-1,4-GLUCURONYLTRANSFERASE 1"/>
    <property type="match status" value="1"/>
</dbReference>
<dbReference type="Pfam" id="PF13896">
    <property type="entry name" value="Glyco_transf_49"/>
    <property type="match status" value="1"/>
</dbReference>
<protein>
    <recommendedName>
        <fullName evidence="1">Beta-1,4-glucuronyltransferase 1</fullName>
        <ecNumber evidence="1">2.4.1.-</ecNumber>
    </recommendedName>
    <alternativeName>
        <fullName>I-beta-1,3-N-acetylglucosaminyltransferase</fullName>
        <shortName>iGnT</shortName>
    </alternativeName>
    <alternativeName>
        <fullName>N-acetyllactosaminide beta-1,3-N-acetylglucosaminyltransferase</fullName>
    </alternativeName>
    <alternativeName>
        <fullName>Poly-N-acetyllactosamine extension enzyme</fullName>
    </alternativeName>
    <alternativeName>
        <fullName>UDP-GlcNAc:betaGal beta-1,3-N-acetylglucosaminyltransferase 1</fullName>
    </alternativeName>
</protein>
<reference key="1">
    <citation type="submission" date="2004-11" db="EMBL/GenBank/DDBJ databases">
        <authorList>
            <consortium name="The German cDNA consortium"/>
        </authorList>
    </citation>
    <scope>NUCLEOTIDE SEQUENCE [LARGE SCALE MRNA]</scope>
    <source>
        <tissue>Brain cortex</tissue>
    </source>
</reference>
<comment type="function">
    <text evidence="1 2">Beta-1,4-glucuronyltransferase involved in O-mannosylation of alpha-dystroglycan (DAG1). Transfers a glucuronic acid (GlcA) residue onto a xylose (Xyl) acceptor to produce the glucuronyl-beta-1,4-xylose-beta disaccharide primer, which is further elongated by LARGE1, during synthesis of phosphorylated O-mannosyl glycan. Phosphorylated O-mannosyl glycan is a carbohydrate structure present in alpha-dystroglycan (DAG1), which is required for binding laminin G-like domain-containing extracellular proteins with high affinity. Required for axon guidance; via its function in O-mannosylation of alpha-dystroglycan (DAG1).</text>
</comment>
<comment type="catalytic activity">
    <reaction evidence="1">
        <text>3-O-[beta-D-Xyl-(1-&gt;4)-Rib-ol-P-Rib-ol-P-3-beta-D-GalNAc-(1-&gt;3)-beta-D-GlcNAc-(1-&gt;4)-(O-6-P-alpha-D-Man)]-Thr-[protein] + UDP-alpha-D-glucuronate = 3-O-[beta-D-GlcA-(1-&gt;3)-beta-D-Xyl-(1-&gt;4)-Rib-ol-P-Rib-ol-P-3-beta-D-GalNAc-(1-&gt;3)-beta-D-GlcNAc-(1-&gt;4)-(O-6-P-alpha-D-Man)]-Thr-[protein] + UDP + H(+)</text>
        <dbReference type="Rhea" id="RHEA:46860"/>
        <dbReference type="Rhea" id="RHEA-COMP:15023"/>
        <dbReference type="Rhea" id="RHEA-COMP:17482"/>
        <dbReference type="ChEBI" id="CHEBI:15378"/>
        <dbReference type="ChEBI" id="CHEBI:58052"/>
        <dbReference type="ChEBI" id="CHEBI:58223"/>
        <dbReference type="ChEBI" id="CHEBI:142405"/>
        <dbReference type="ChEBI" id="CHEBI:177336"/>
    </reaction>
</comment>
<comment type="cofactor">
    <cofactor evidence="1">
        <name>Mn(2+)</name>
        <dbReference type="ChEBI" id="CHEBI:29035"/>
    </cofactor>
</comment>
<comment type="pathway">
    <text evidence="1 2">Protein modification; protein glycosylation.</text>
</comment>
<comment type="subunit">
    <text evidence="1">Interacts with LARGE1 and LARGE2.</text>
</comment>
<comment type="subcellular location">
    <subcellularLocation>
        <location evidence="1 2">Golgi apparatus membrane</location>
        <topology>Single-pass type II membrane protein</topology>
    </subcellularLocation>
    <text evidence="1">Localizes near the trans-Golgi apparatus.</text>
</comment>
<comment type="similarity">
    <text evidence="4">Belongs to the glycosyltransferase 49 family.</text>
</comment>
<sequence length="415" mass="47149">MQMSYAIRCAFYQLLLAALMLVAMLQLLYLSLLSGLHGQEEQDQYFEFFPPSPRSVDQVKTQLRTALASGGVLDASGDYRVYRGLLKTTMDPNDVILATHASVDNLLHLSGLLERWEGPLSVSVFAATKEEAQLATVLAYALSSHCPDMRARVAMHLVCPSRYEAAVPDPREPGEFALLRSCQEVFDKLARVAQPGINYALGTNVSYPNNLLRNLAREGANYALVIDVDMVPSEGLWRGLREMLDQSNQWGGTALVVPAFEIRRARRMPMNKNELVQLYQVGEVRPFYYGLCTPCQAPTNYSRWVNLPEESLLRPAYVVPWQDPWEPFYVAGGKVPTFDERFRQYGFNRISQACELHVAGFDFEVLNEGFLVHKGFKEALKFHPQKEAENQHNKILYRQFKQELKAKYPNSPRRC</sequence>
<gene>
    <name evidence="1" type="primary">B4GAT1</name>
    <name type="synonym">B3GNT1</name>
    <name type="synonym">B3GNT6</name>
</gene>
<name>B4GA1_PONAB</name>
<proteinExistence type="evidence at transcript level"/>
<organism>
    <name type="scientific">Pongo abelii</name>
    <name type="common">Sumatran orangutan</name>
    <name type="synonym">Pongo pygmaeus abelii</name>
    <dbReference type="NCBI Taxonomy" id="9601"/>
    <lineage>
        <taxon>Eukaryota</taxon>
        <taxon>Metazoa</taxon>
        <taxon>Chordata</taxon>
        <taxon>Craniata</taxon>
        <taxon>Vertebrata</taxon>
        <taxon>Euteleostomi</taxon>
        <taxon>Mammalia</taxon>
        <taxon>Eutheria</taxon>
        <taxon>Euarchontoglires</taxon>
        <taxon>Primates</taxon>
        <taxon>Haplorrhini</taxon>
        <taxon>Catarrhini</taxon>
        <taxon>Hominidae</taxon>
        <taxon>Pongo</taxon>
    </lineage>
</organism>
<keyword id="KW-0325">Glycoprotein</keyword>
<keyword id="KW-0328">Glycosyltransferase</keyword>
<keyword id="KW-0333">Golgi apparatus</keyword>
<keyword id="KW-0464">Manganese</keyword>
<keyword id="KW-0472">Membrane</keyword>
<keyword id="KW-0479">Metal-binding</keyword>
<keyword id="KW-1185">Reference proteome</keyword>
<keyword id="KW-0735">Signal-anchor</keyword>
<keyword id="KW-0808">Transferase</keyword>
<keyword id="KW-0812">Transmembrane</keyword>
<keyword id="KW-1133">Transmembrane helix</keyword>